<feature type="chain" id="PRO_1000059290" description="Homoserine O-succinyltransferase">
    <location>
        <begin position="1"/>
        <end position="309"/>
    </location>
</feature>
<feature type="active site" description="Acyl-thioester intermediate" evidence="1">
    <location>
        <position position="142"/>
    </location>
</feature>
<feature type="active site" description="Proton acceptor" evidence="1">
    <location>
        <position position="235"/>
    </location>
</feature>
<feature type="active site" evidence="1">
    <location>
        <position position="237"/>
    </location>
</feature>
<feature type="binding site" evidence="1">
    <location>
        <position position="163"/>
    </location>
    <ligand>
        <name>substrate</name>
    </ligand>
</feature>
<feature type="binding site" evidence="1">
    <location>
        <position position="192"/>
    </location>
    <ligand>
        <name>substrate</name>
    </ligand>
</feature>
<feature type="binding site" evidence="1">
    <location>
        <position position="249"/>
    </location>
    <ligand>
        <name>substrate</name>
    </ligand>
</feature>
<feature type="site" description="Important for acyl-CoA specificity" evidence="1">
    <location>
        <position position="111"/>
    </location>
</feature>
<feature type="site" description="Important for substrate specificity" evidence="1">
    <location>
        <position position="192"/>
    </location>
</feature>
<gene>
    <name evidence="1" type="primary">metAS</name>
    <name type="ordered locus">EcE24377A_4555</name>
</gene>
<organism>
    <name type="scientific">Escherichia coli O139:H28 (strain E24377A / ETEC)</name>
    <dbReference type="NCBI Taxonomy" id="331111"/>
    <lineage>
        <taxon>Bacteria</taxon>
        <taxon>Pseudomonadati</taxon>
        <taxon>Pseudomonadota</taxon>
        <taxon>Gammaproteobacteria</taxon>
        <taxon>Enterobacterales</taxon>
        <taxon>Enterobacteriaceae</taxon>
        <taxon>Escherichia</taxon>
    </lineage>
</organism>
<proteinExistence type="inferred from homology"/>
<comment type="function">
    <text evidence="1">Transfers a succinyl group from succinyl-CoA to L-homoserine, forming succinyl-L-homoserine.</text>
</comment>
<comment type="catalytic activity">
    <reaction evidence="1">
        <text>L-homoserine + succinyl-CoA = O-succinyl-L-homoserine + CoA</text>
        <dbReference type="Rhea" id="RHEA:22008"/>
        <dbReference type="ChEBI" id="CHEBI:57287"/>
        <dbReference type="ChEBI" id="CHEBI:57292"/>
        <dbReference type="ChEBI" id="CHEBI:57476"/>
        <dbReference type="ChEBI" id="CHEBI:57661"/>
        <dbReference type="EC" id="2.3.1.46"/>
    </reaction>
</comment>
<comment type="pathway">
    <text evidence="1">Amino-acid biosynthesis; L-methionine biosynthesis via de novo pathway; O-succinyl-L-homoserine from L-homoserine: step 1/1.</text>
</comment>
<comment type="subunit">
    <text evidence="1">Homodimer.</text>
</comment>
<comment type="subcellular location">
    <subcellularLocation>
        <location evidence="1">Cytoplasm</location>
    </subcellularLocation>
</comment>
<comment type="similarity">
    <text evidence="1">Belongs to the MetA family.</text>
</comment>
<keyword id="KW-0012">Acyltransferase</keyword>
<keyword id="KW-0028">Amino-acid biosynthesis</keyword>
<keyword id="KW-0963">Cytoplasm</keyword>
<keyword id="KW-0486">Methionine biosynthesis</keyword>
<keyword id="KW-1185">Reference proteome</keyword>
<keyword id="KW-0808">Transferase</keyword>
<reference key="1">
    <citation type="journal article" date="2008" name="J. Bacteriol.">
        <title>The pangenome structure of Escherichia coli: comparative genomic analysis of E. coli commensal and pathogenic isolates.</title>
        <authorList>
            <person name="Rasko D.A."/>
            <person name="Rosovitz M.J."/>
            <person name="Myers G.S.A."/>
            <person name="Mongodin E.F."/>
            <person name="Fricke W.F."/>
            <person name="Gajer P."/>
            <person name="Crabtree J."/>
            <person name="Sebaihia M."/>
            <person name="Thomson N.R."/>
            <person name="Chaudhuri R."/>
            <person name="Henderson I.R."/>
            <person name="Sperandio V."/>
            <person name="Ravel J."/>
        </authorList>
    </citation>
    <scope>NUCLEOTIDE SEQUENCE [LARGE SCALE GENOMIC DNA]</scope>
    <source>
        <strain>E24377A / ETEC</strain>
    </source>
</reference>
<accession>A7ZUM6</accession>
<protein>
    <recommendedName>
        <fullName evidence="1">Homoserine O-succinyltransferase</fullName>
        <shortName evidence="1">HST</shortName>
        <ecNumber evidence="1">2.3.1.46</ecNumber>
    </recommendedName>
    <alternativeName>
        <fullName evidence="1">Homoserine transsuccinylase</fullName>
        <shortName evidence="1">HTS</shortName>
    </alternativeName>
</protein>
<dbReference type="EC" id="2.3.1.46" evidence="1"/>
<dbReference type="EMBL" id="CP000800">
    <property type="protein sequence ID" value="ABV18943.1"/>
    <property type="molecule type" value="Genomic_DNA"/>
</dbReference>
<dbReference type="SMR" id="A7ZUM6"/>
<dbReference type="KEGG" id="ecw:EcE24377A_4555"/>
<dbReference type="HOGENOM" id="CLU_057851_0_1_6"/>
<dbReference type="UniPathway" id="UPA00051">
    <property type="reaction ID" value="UER00075"/>
</dbReference>
<dbReference type="Proteomes" id="UP000001122">
    <property type="component" value="Chromosome"/>
</dbReference>
<dbReference type="GO" id="GO:0005737">
    <property type="term" value="C:cytoplasm"/>
    <property type="evidence" value="ECO:0007669"/>
    <property type="project" value="UniProtKB-SubCell"/>
</dbReference>
<dbReference type="GO" id="GO:0004414">
    <property type="term" value="F:homoserine O-acetyltransferase activity"/>
    <property type="evidence" value="ECO:0007669"/>
    <property type="project" value="UniProtKB-UniRule"/>
</dbReference>
<dbReference type="GO" id="GO:0008899">
    <property type="term" value="F:homoserine O-succinyltransferase activity"/>
    <property type="evidence" value="ECO:0007669"/>
    <property type="project" value="UniProtKB-EC"/>
</dbReference>
<dbReference type="GO" id="GO:0019281">
    <property type="term" value="P:L-methionine biosynthetic process from homoserine via O-succinyl-L-homoserine and cystathionine"/>
    <property type="evidence" value="ECO:0007669"/>
    <property type="project" value="InterPro"/>
</dbReference>
<dbReference type="CDD" id="cd03131">
    <property type="entry name" value="GATase1_HTS"/>
    <property type="match status" value="1"/>
</dbReference>
<dbReference type="FunFam" id="3.40.50.880:FF:000004">
    <property type="entry name" value="Homoserine O-succinyltransferase"/>
    <property type="match status" value="1"/>
</dbReference>
<dbReference type="Gene3D" id="3.40.50.880">
    <property type="match status" value="1"/>
</dbReference>
<dbReference type="HAMAP" id="MF_00295">
    <property type="entry name" value="MetA_acyltransf"/>
    <property type="match status" value="1"/>
</dbReference>
<dbReference type="InterPro" id="IPR029062">
    <property type="entry name" value="Class_I_gatase-like"/>
</dbReference>
<dbReference type="InterPro" id="IPR005697">
    <property type="entry name" value="HST_MetA"/>
</dbReference>
<dbReference type="InterPro" id="IPR033752">
    <property type="entry name" value="MetA_family"/>
</dbReference>
<dbReference type="NCBIfam" id="TIGR01001">
    <property type="entry name" value="metA"/>
    <property type="match status" value="1"/>
</dbReference>
<dbReference type="PANTHER" id="PTHR20919">
    <property type="entry name" value="HOMOSERINE O-SUCCINYLTRANSFERASE"/>
    <property type="match status" value="1"/>
</dbReference>
<dbReference type="PANTHER" id="PTHR20919:SF0">
    <property type="entry name" value="HOMOSERINE O-SUCCINYLTRANSFERASE"/>
    <property type="match status" value="1"/>
</dbReference>
<dbReference type="Pfam" id="PF04204">
    <property type="entry name" value="HTS"/>
    <property type="match status" value="1"/>
</dbReference>
<dbReference type="PIRSF" id="PIRSF000450">
    <property type="entry name" value="H_ser_succinyltr"/>
    <property type="match status" value="1"/>
</dbReference>
<dbReference type="SUPFAM" id="SSF52317">
    <property type="entry name" value="Class I glutamine amidotransferase-like"/>
    <property type="match status" value="1"/>
</dbReference>
<evidence type="ECO:0000255" key="1">
    <source>
        <dbReference type="HAMAP-Rule" id="MF_00295"/>
    </source>
</evidence>
<name>METAS_ECO24</name>
<sequence length="309" mass="35699">MPIRVPDELPAVNFLREENVFVMTTSRASGQEIRPLKVLILNLMPKKIETENQFLRLLSNSPLQVDIQLLRIDSRESRNTPAEHLNNFYCNFEDIQEQNFDGLIVTGAPLGLVEFNDVAYWPQIKQVLEWSKDHVTSTLFVCWAVQAALNILYGIPKQTRTDKLSGVYEHHILHPHALLTRGFDDSFLAPHSRYADFPAALIRDYTDLEILAETEEGDAYLFASKDKRIAFVTGHPEYDAQTLAQEYFRDVEAGLGPEVPYNYFPHNDPQNTPRASWRSHGNLLFTNWLNYYVYQITPYDLRHMNPTLD</sequence>